<accession>Q0ALV0</accession>
<reference key="1">
    <citation type="submission" date="2006-08" db="EMBL/GenBank/DDBJ databases">
        <title>Complete sequence of Maricaulis maris MCS10.</title>
        <authorList>
            <consortium name="US DOE Joint Genome Institute"/>
            <person name="Copeland A."/>
            <person name="Lucas S."/>
            <person name="Lapidus A."/>
            <person name="Barry K."/>
            <person name="Detter J.C."/>
            <person name="Glavina del Rio T."/>
            <person name="Hammon N."/>
            <person name="Israni S."/>
            <person name="Dalin E."/>
            <person name="Tice H."/>
            <person name="Pitluck S."/>
            <person name="Saunders E."/>
            <person name="Brettin T."/>
            <person name="Bruce D."/>
            <person name="Han C."/>
            <person name="Tapia R."/>
            <person name="Gilna P."/>
            <person name="Schmutz J."/>
            <person name="Larimer F."/>
            <person name="Land M."/>
            <person name="Hauser L."/>
            <person name="Kyrpides N."/>
            <person name="Mikhailova N."/>
            <person name="Viollier P."/>
            <person name="Stephens C."/>
            <person name="Richardson P."/>
        </authorList>
    </citation>
    <scope>NUCLEOTIDE SEQUENCE [LARGE SCALE GENOMIC DNA]</scope>
    <source>
        <strain>MCS10</strain>
    </source>
</reference>
<sequence length="303" mass="35011">MRARPLSAHLKALEAESMHIMREVAAEFDNPVMLYSIGKDSAVMLHLALKAFYPSRPPFPLQHVDSTFKFKEMITFRDAIAEELGLEIRVEINEDGRARGINPFDHGSQLHTQVMKTEALRSAMTRHKYDAAFGGARRDEEKSRAKERIFSFRDTNHGWDPKNQRPELWSNYNTKIKQGESIRVFPLSNWTELDIWQYILEEDIPIVPLYYAAHRPVVERDGQLIMVDDERLPMKDGEKPDLKLVRFRTLGCYPLTGAIESSAQTLEEIVLEMLTARTSERSGRLIDHDESGSMEKKKREGYF</sequence>
<keyword id="KW-0067">ATP-binding</keyword>
<keyword id="KW-0547">Nucleotide-binding</keyword>
<keyword id="KW-0548">Nucleotidyltransferase</keyword>
<keyword id="KW-1185">Reference proteome</keyword>
<keyword id="KW-0808">Transferase</keyword>
<gene>
    <name evidence="1" type="primary">cysD</name>
    <name type="ordered locus">Mmar10_2451</name>
</gene>
<feature type="chain" id="PRO_0000340199" description="Sulfate adenylyltransferase subunit 2">
    <location>
        <begin position="1"/>
        <end position="303"/>
    </location>
</feature>
<feature type="region of interest" description="Disordered" evidence="2">
    <location>
        <begin position="282"/>
        <end position="303"/>
    </location>
</feature>
<proteinExistence type="inferred from homology"/>
<evidence type="ECO:0000255" key="1">
    <source>
        <dbReference type="HAMAP-Rule" id="MF_00064"/>
    </source>
</evidence>
<evidence type="ECO:0000256" key="2">
    <source>
        <dbReference type="SAM" id="MobiDB-lite"/>
    </source>
</evidence>
<evidence type="ECO:0000305" key="3"/>
<comment type="function">
    <text evidence="1">With CysN forms the ATP sulfurylase (ATPS) that catalyzes the adenylation of sulfate producing adenosine 5'-phosphosulfate (APS) and diphosphate, the first enzymatic step in sulfur assimilation pathway. APS synthesis involves the formation of a high-energy phosphoric-sulfuric acid anhydride bond driven by GTP hydrolysis by CysN coupled to ATP hydrolysis by CysD.</text>
</comment>
<comment type="catalytic activity">
    <reaction evidence="1">
        <text>sulfate + ATP + H(+) = adenosine 5'-phosphosulfate + diphosphate</text>
        <dbReference type="Rhea" id="RHEA:18133"/>
        <dbReference type="ChEBI" id="CHEBI:15378"/>
        <dbReference type="ChEBI" id="CHEBI:16189"/>
        <dbReference type="ChEBI" id="CHEBI:30616"/>
        <dbReference type="ChEBI" id="CHEBI:33019"/>
        <dbReference type="ChEBI" id="CHEBI:58243"/>
        <dbReference type="EC" id="2.7.7.4"/>
    </reaction>
</comment>
<comment type="pathway">
    <text evidence="1">Sulfur metabolism; hydrogen sulfide biosynthesis; sulfite from sulfate: step 1/3.</text>
</comment>
<comment type="subunit">
    <text evidence="1">Heterodimer composed of CysD, the smaller subunit, and CysN.</text>
</comment>
<comment type="similarity">
    <text evidence="1">Belongs to the PAPS reductase family. CysD subfamily.</text>
</comment>
<comment type="sequence caution" evidence="3">
    <conflict type="erroneous initiation">
        <sequence resource="EMBL-CDS" id="ABI66743"/>
    </conflict>
</comment>
<dbReference type="EC" id="2.7.7.4" evidence="1"/>
<dbReference type="EMBL" id="CP000449">
    <property type="protein sequence ID" value="ABI66743.1"/>
    <property type="status" value="ALT_INIT"/>
    <property type="molecule type" value="Genomic_DNA"/>
</dbReference>
<dbReference type="RefSeq" id="WP_041637755.1">
    <property type="nucleotide sequence ID" value="NC_008347.1"/>
</dbReference>
<dbReference type="SMR" id="Q0ALV0"/>
<dbReference type="STRING" id="394221.Mmar10_2451"/>
<dbReference type="KEGG" id="mmr:Mmar10_2451"/>
<dbReference type="eggNOG" id="COG0175">
    <property type="taxonomic scope" value="Bacteria"/>
</dbReference>
<dbReference type="HOGENOM" id="CLU_043026_0_0_5"/>
<dbReference type="OrthoDB" id="9772604at2"/>
<dbReference type="UniPathway" id="UPA00140">
    <property type="reaction ID" value="UER00204"/>
</dbReference>
<dbReference type="Proteomes" id="UP000001964">
    <property type="component" value="Chromosome"/>
</dbReference>
<dbReference type="GO" id="GO:0005524">
    <property type="term" value="F:ATP binding"/>
    <property type="evidence" value="ECO:0007669"/>
    <property type="project" value="UniProtKB-KW"/>
</dbReference>
<dbReference type="GO" id="GO:0004781">
    <property type="term" value="F:sulfate adenylyltransferase (ATP) activity"/>
    <property type="evidence" value="ECO:0007669"/>
    <property type="project" value="UniProtKB-UniRule"/>
</dbReference>
<dbReference type="GO" id="GO:0070814">
    <property type="term" value="P:hydrogen sulfide biosynthetic process"/>
    <property type="evidence" value="ECO:0007669"/>
    <property type="project" value="UniProtKB-UniRule"/>
</dbReference>
<dbReference type="GO" id="GO:0000103">
    <property type="term" value="P:sulfate assimilation"/>
    <property type="evidence" value="ECO:0007669"/>
    <property type="project" value="UniProtKB-UniRule"/>
</dbReference>
<dbReference type="FunFam" id="3.40.50.620:FF:000002">
    <property type="entry name" value="Sulfate adenylyltransferase subunit 2"/>
    <property type="match status" value="1"/>
</dbReference>
<dbReference type="Gene3D" id="3.40.50.620">
    <property type="entry name" value="HUPs"/>
    <property type="match status" value="1"/>
</dbReference>
<dbReference type="HAMAP" id="MF_00064">
    <property type="entry name" value="Sulf_adenylyltr_sub2"/>
    <property type="match status" value="1"/>
</dbReference>
<dbReference type="InterPro" id="IPR002500">
    <property type="entry name" value="PAPS_reduct_dom"/>
</dbReference>
<dbReference type="InterPro" id="IPR014729">
    <property type="entry name" value="Rossmann-like_a/b/a_fold"/>
</dbReference>
<dbReference type="InterPro" id="IPR011784">
    <property type="entry name" value="SO4_adenylTrfase_ssu"/>
</dbReference>
<dbReference type="InterPro" id="IPR050128">
    <property type="entry name" value="Sulfate_adenylyltrnsfr_sub2"/>
</dbReference>
<dbReference type="NCBIfam" id="TIGR02039">
    <property type="entry name" value="CysD"/>
    <property type="match status" value="1"/>
</dbReference>
<dbReference type="NCBIfam" id="NF003587">
    <property type="entry name" value="PRK05253.1"/>
    <property type="match status" value="1"/>
</dbReference>
<dbReference type="NCBIfam" id="NF009214">
    <property type="entry name" value="PRK12563.1"/>
    <property type="match status" value="1"/>
</dbReference>
<dbReference type="PANTHER" id="PTHR43196">
    <property type="entry name" value="SULFATE ADENYLYLTRANSFERASE SUBUNIT 2"/>
    <property type="match status" value="1"/>
</dbReference>
<dbReference type="PANTHER" id="PTHR43196:SF1">
    <property type="entry name" value="SULFATE ADENYLYLTRANSFERASE SUBUNIT 2"/>
    <property type="match status" value="1"/>
</dbReference>
<dbReference type="Pfam" id="PF01507">
    <property type="entry name" value="PAPS_reduct"/>
    <property type="match status" value="1"/>
</dbReference>
<dbReference type="PIRSF" id="PIRSF002936">
    <property type="entry name" value="CysDAde_trans"/>
    <property type="match status" value="1"/>
</dbReference>
<dbReference type="SUPFAM" id="SSF52402">
    <property type="entry name" value="Adenine nucleotide alpha hydrolases-like"/>
    <property type="match status" value="1"/>
</dbReference>
<protein>
    <recommendedName>
        <fullName evidence="1">Sulfate adenylyltransferase subunit 2</fullName>
        <ecNumber evidence="1">2.7.7.4</ecNumber>
    </recommendedName>
    <alternativeName>
        <fullName evidence="1">ATP-sulfurylase small subunit</fullName>
    </alternativeName>
    <alternativeName>
        <fullName evidence="1">Sulfate adenylate transferase</fullName>
        <shortName evidence="1">SAT</shortName>
    </alternativeName>
</protein>
<name>CYSD_MARMM</name>
<organism>
    <name type="scientific">Maricaulis maris (strain MCS10)</name>
    <name type="common">Caulobacter maris</name>
    <dbReference type="NCBI Taxonomy" id="394221"/>
    <lineage>
        <taxon>Bacteria</taxon>
        <taxon>Pseudomonadati</taxon>
        <taxon>Pseudomonadota</taxon>
        <taxon>Alphaproteobacteria</taxon>
        <taxon>Maricaulales</taxon>
        <taxon>Maricaulaceae</taxon>
        <taxon>Maricaulis</taxon>
    </lineage>
</organism>